<sequence>MSDGFKALKLYNTLTRRDEEFVPLDPANVRMYVCGPTVYDFAHIGNARPVIVFDVLFRLLRQLYGDDHVTYVRNITDVDDKINARALRDFGEDITAGRLTLNEAIRRVTERTAAQFHADVAALGCLAPTHEPRATEFVLPRTDGKADMASLIQTLIDRGHAYAAKGEILFDTASMPDYGQLSKRRLEDQQAGARVAVDPHKRNPSDFVLWKESSAEEPGWEGRFTFEGKPLVIRGRPGWHIECSAMSAAYLGEVFDIHGGGLDLIFPHHENEIAQSRCAHGTPVMANYWLHNGFVQVEGKKMAKSEGNFVTIHDLLATENFGGRKWPGEVLRLAILMTHYREPLDFSLRKLEEAEAVLDGWYRVVGDAKHQEGDSGAVRRALLDDLGTPAAITVLHDLRAQAARGSEAAKADLKANAVLLGLLTQSQDQWFSGKAADAAIDEAAVEERVAARLSLLRAKNFPEADRIREELSGRGIQLMDYKDPETGERRTKWEVKR</sequence>
<gene>
    <name evidence="1" type="primary">cysS</name>
    <name type="ordered locus">Meso_0965</name>
</gene>
<evidence type="ECO:0000255" key="1">
    <source>
        <dbReference type="HAMAP-Rule" id="MF_00041"/>
    </source>
</evidence>
<evidence type="ECO:0000256" key="2">
    <source>
        <dbReference type="SAM" id="MobiDB-lite"/>
    </source>
</evidence>
<evidence type="ECO:0000305" key="3"/>
<comment type="catalytic activity">
    <reaction evidence="1">
        <text>tRNA(Cys) + L-cysteine + ATP = L-cysteinyl-tRNA(Cys) + AMP + diphosphate</text>
        <dbReference type="Rhea" id="RHEA:17773"/>
        <dbReference type="Rhea" id="RHEA-COMP:9661"/>
        <dbReference type="Rhea" id="RHEA-COMP:9679"/>
        <dbReference type="ChEBI" id="CHEBI:30616"/>
        <dbReference type="ChEBI" id="CHEBI:33019"/>
        <dbReference type="ChEBI" id="CHEBI:35235"/>
        <dbReference type="ChEBI" id="CHEBI:78442"/>
        <dbReference type="ChEBI" id="CHEBI:78517"/>
        <dbReference type="ChEBI" id="CHEBI:456215"/>
        <dbReference type="EC" id="6.1.1.16"/>
    </reaction>
</comment>
<comment type="cofactor">
    <cofactor evidence="1">
        <name>Zn(2+)</name>
        <dbReference type="ChEBI" id="CHEBI:29105"/>
    </cofactor>
    <text evidence="1">Binds 1 zinc ion per subunit.</text>
</comment>
<comment type="subunit">
    <text evidence="1">Monomer.</text>
</comment>
<comment type="subcellular location">
    <subcellularLocation>
        <location evidence="1">Cytoplasm</location>
    </subcellularLocation>
</comment>
<comment type="similarity">
    <text evidence="1">Belongs to the class-I aminoacyl-tRNA synthetase family.</text>
</comment>
<comment type="sequence caution" evidence="3">
    <conflict type="erroneous initiation">
        <sequence resource="EMBL-CDS" id="ABG62362"/>
    </conflict>
</comment>
<accession>Q11JR3</accession>
<protein>
    <recommendedName>
        <fullName evidence="1">Cysteine--tRNA ligase</fullName>
        <ecNumber evidence="1">6.1.1.16</ecNumber>
    </recommendedName>
    <alternativeName>
        <fullName evidence="1">Cysteinyl-tRNA synthetase</fullName>
        <shortName evidence="1">CysRS</shortName>
    </alternativeName>
</protein>
<name>SYC_CHESB</name>
<proteinExistence type="inferred from homology"/>
<dbReference type="EC" id="6.1.1.16" evidence="1"/>
<dbReference type="EMBL" id="CP000390">
    <property type="protein sequence ID" value="ABG62362.1"/>
    <property type="status" value="ALT_INIT"/>
    <property type="molecule type" value="Genomic_DNA"/>
</dbReference>
<dbReference type="SMR" id="Q11JR3"/>
<dbReference type="STRING" id="266779.Meso_0965"/>
<dbReference type="KEGG" id="mes:Meso_0965"/>
<dbReference type="eggNOG" id="COG0215">
    <property type="taxonomic scope" value="Bacteria"/>
</dbReference>
<dbReference type="HOGENOM" id="CLU_013528_0_1_5"/>
<dbReference type="OrthoDB" id="9815130at2"/>
<dbReference type="GO" id="GO:0005829">
    <property type="term" value="C:cytosol"/>
    <property type="evidence" value="ECO:0007669"/>
    <property type="project" value="TreeGrafter"/>
</dbReference>
<dbReference type="GO" id="GO:0005524">
    <property type="term" value="F:ATP binding"/>
    <property type="evidence" value="ECO:0007669"/>
    <property type="project" value="UniProtKB-UniRule"/>
</dbReference>
<dbReference type="GO" id="GO:0004817">
    <property type="term" value="F:cysteine-tRNA ligase activity"/>
    <property type="evidence" value="ECO:0007669"/>
    <property type="project" value="UniProtKB-UniRule"/>
</dbReference>
<dbReference type="GO" id="GO:0008270">
    <property type="term" value="F:zinc ion binding"/>
    <property type="evidence" value="ECO:0007669"/>
    <property type="project" value="UniProtKB-UniRule"/>
</dbReference>
<dbReference type="GO" id="GO:0006423">
    <property type="term" value="P:cysteinyl-tRNA aminoacylation"/>
    <property type="evidence" value="ECO:0007669"/>
    <property type="project" value="UniProtKB-UniRule"/>
</dbReference>
<dbReference type="CDD" id="cd00672">
    <property type="entry name" value="CysRS_core"/>
    <property type="match status" value="1"/>
</dbReference>
<dbReference type="Gene3D" id="1.20.120.1910">
    <property type="entry name" value="Cysteine-tRNA ligase, C-terminal anti-codon recognition domain"/>
    <property type="match status" value="1"/>
</dbReference>
<dbReference type="Gene3D" id="3.40.50.620">
    <property type="entry name" value="HUPs"/>
    <property type="match status" value="1"/>
</dbReference>
<dbReference type="HAMAP" id="MF_00041">
    <property type="entry name" value="Cys_tRNA_synth"/>
    <property type="match status" value="1"/>
</dbReference>
<dbReference type="InterPro" id="IPR015803">
    <property type="entry name" value="Cys-tRNA-ligase"/>
</dbReference>
<dbReference type="InterPro" id="IPR015273">
    <property type="entry name" value="Cys-tRNA-synt_Ia_DALR"/>
</dbReference>
<dbReference type="InterPro" id="IPR024909">
    <property type="entry name" value="Cys-tRNA/MSH_ligase"/>
</dbReference>
<dbReference type="InterPro" id="IPR014729">
    <property type="entry name" value="Rossmann-like_a/b/a_fold"/>
</dbReference>
<dbReference type="InterPro" id="IPR032678">
    <property type="entry name" value="tRNA-synt_1_cat_dom"/>
</dbReference>
<dbReference type="InterPro" id="IPR009080">
    <property type="entry name" value="tRNAsynth_Ia_anticodon-bd"/>
</dbReference>
<dbReference type="NCBIfam" id="TIGR00435">
    <property type="entry name" value="cysS"/>
    <property type="match status" value="1"/>
</dbReference>
<dbReference type="PANTHER" id="PTHR10890:SF3">
    <property type="entry name" value="CYSTEINE--TRNA LIGASE, CYTOPLASMIC"/>
    <property type="match status" value="1"/>
</dbReference>
<dbReference type="PANTHER" id="PTHR10890">
    <property type="entry name" value="CYSTEINYL-TRNA SYNTHETASE"/>
    <property type="match status" value="1"/>
</dbReference>
<dbReference type="Pfam" id="PF09190">
    <property type="entry name" value="DALR_2"/>
    <property type="match status" value="1"/>
</dbReference>
<dbReference type="Pfam" id="PF01406">
    <property type="entry name" value="tRNA-synt_1e"/>
    <property type="match status" value="1"/>
</dbReference>
<dbReference type="PRINTS" id="PR00983">
    <property type="entry name" value="TRNASYNTHCYS"/>
</dbReference>
<dbReference type="SMART" id="SM00840">
    <property type="entry name" value="DALR_2"/>
    <property type="match status" value="1"/>
</dbReference>
<dbReference type="SUPFAM" id="SSF47323">
    <property type="entry name" value="Anticodon-binding domain of a subclass of class I aminoacyl-tRNA synthetases"/>
    <property type="match status" value="1"/>
</dbReference>
<dbReference type="SUPFAM" id="SSF52374">
    <property type="entry name" value="Nucleotidylyl transferase"/>
    <property type="match status" value="1"/>
</dbReference>
<keyword id="KW-0030">Aminoacyl-tRNA synthetase</keyword>
<keyword id="KW-0067">ATP-binding</keyword>
<keyword id="KW-0963">Cytoplasm</keyword>
<keyword id="KW-0436">Ligase</keyword>
<keyword id="KW-0479">Metal-binding</keyword>
<keyword id="KW-0547">Nucleotide-binding</keyword>
<keyword id="KW-0648">Protein biosynthesis</keyword>
<keyword id="KW-0862">Zinc</keyword>
<feature type="chain" id="PRO_0000332850" description="Cysteine--tRNA ligase">
    <location>
        <begin position="1"/>
        <end position="497"/>
    </location>
</feature>
<feature type="region of interest" description="Disordered" evidence="2">
    <location>
        <begin position="478"/>
        <end position="497"/>
    </location>
</feature>
<feature type="short sequence motif" description="'HIGH' region">
    <location>
        <begin position="36"/>
        <end position="46"/>
    </location>
</feature>
<feature type="short sequence motif" description="'KMSKS' region">
    <location>
        <begin position="301"/>
        <end position="305"/>
    </location>
</feature>
<feature type="compositionally biased region" description="Basic and acidic residues" evidence="2">
    <location>
        <begin position="480"/>
        <end position="497"/>
    </location>
</feature>
<feature type="binding site" evidence="1">
    <location>
        <position position="34"/>
    </location>
    <ligand>
        <name>Zn(2+)</name>
        <dbReference type="ChEBI" id="CHEBI:29105"/>
    </ligand>
</feature>
<feature type="binding site" evidence="1">
    <location>
        <position position="243"/>
    </location>
    <ligand>
        <name>Zn(2+)</name>
        <dbReference type="ChEBI" id="CHEBI:29105"/>
    </ligand>
</feature>
<feature type="binding site" evidence="1">
    <location>
        <position position="268"/>
    </location>
    <ligand>
        <name>Zn(2+)</name>
        <dbReference type="ChEBI" id="CHEBI:29105"/>
    </ligand>
</feature>
<feature type="binding site" evidence="1">
    <location>
        <position position="272"/>
    </location>
    <ligand>
        <name>Zn(2+)</name>
        <dbReference type="ChEBI" id="CHEBI:29105"/>
    </ligand>
</feature>
<feature type="binding site" evidence="1">
    <location>
        <position position="304"/>
    </location>
    <ligand>
        <name>ATP</name>
        <dbReference type="ChEBI" id="CHEBI:30616"/>
    </ligand>
</feature>
<reference key="1">
    <citation type="submission" date="2006-06" db="EMBL/GenBank/DDBJ databases">
        <title>Complete sequence of chromosome of Mesorhizobium sp. BNC1.</title>
        <authorList>
            <consortium name="US DOE Joint Genome Institute"/>
            <person name="Copeland A."/>
            <person name="Lucas S."/>
            <person name="Lapidus A."/>
            <person name="Barry K."/>
            <person name="Detter J.C."/>
            <person name="Glavina del Rio T."/>
            <person name="Hammon N."/>
            <person name="Israni S."/>
            <person name="Dalin E."/>
            <person name="Tice H."/>
            <person name="Pitluck S."/>
            <person name="Chertkov O."/>
            <person name="Brettin T."/>
            <person name="Bruce D."/>
            <person name="Han C."/>
            <person name="Tapia R."/>
            <person name="Gilna P."/>
            <person name="Schmutz J."/>
            <person name="Larimer F."/>
            <person name="Land M."/>
            <person name="Hauser L."/>
            <person name="Kyrpides N."/>
            <person name="Mikhailova N."/>
            <person name="Richardson P."/>
        </authorList>
    </citation>
    <scope>NUCLEOTIDE SEQUENCE [LARGE SCALE GENOMIC DNA]</scope>
    <source>
        <strain>BNC1</strain>
    </source>
</reference>
<organism>
    <name type="scientific">Chelativorans sp. (strain BNC1)</name>
    <dbReference type="NCBI Taxonomy" id="266779"/>
    <lineage>
        <taxon>Bacteria</taxon>
        <taxon>Pseudomonadati</taxon>
        <taxon>Pseudomonadota</taxon>
        <taxon>Alphaproteobacteria</taxon>
        <taxon>Hyphomicrobiales</taxon>
        <taxon>Phyllobacteriaceae</taxon>
        <taxon>Chelativorans</taxon>
    </lineage>
</organism>